<organism>
    <name type="scientific">Human cytomegalovirus (strain Merlin)</name>
    <name type="common">HHV-5</name>
    <name type="synonym">Human herpesvirus 5</name>
    <dbReference type="NCBI Taxonomy" id="295027"/>
    <lineage>
        <taxon>Viruses</taxon>
        <taxon>Duplodnaviria</taxon>
        <taxon>Heunggongvirae</taxon>
        <taxon>Peploviricota</taxon>
        <taxon>Herviviricetes</taxon>
        <taxon>Herpesvirales</taxon>
        <taxon>Orthoherpesviridae</taxon>
        <taxon>Betaherpesvirinae</taxon>
        <taxon>Cytomegalovirus</taxon>
        <taxon>Cytomegalovirus humanbeta5</taxon>
        <taxon>Human cytomegalovirus</taxon>
    </lineage>
</organism>
<protein>
    <recommendedName>
        <fullName>Protein UL141</fullName>
    </recommendedName>
</protein>
<reference key="1">
    <citation type="journal article" date="2004" name="J. Gen. Virol.">
        <title>Genetic content of wild-type human cytomegalovirus.</title>
        <authorList>
            <person name="Dolan A."/>
            <person name="Cunningham C."/>
            <person name="Hector R.D."/>
            <person name="Hassan-Walker A.F."/>
            <person name="Lee L."/>
            <person name="Addison C."/>
            <person name="Dargan D.J."/>
            <person name="McGeoch D.J."/>
            <person name="Gatherer D."/>
            <person name="Emery V.C."/>
            <person name="Griffiths P.D."/>
            <person name="Sinzger C."/>
            <person name="McSharry B.P."/>
            <person name="Wilkinson G.W.G."/>
            <person name="Davison A.J."/>
        </authorList>
    </citation>
    <scope>NUCLEOTIDE SEQUENCE [GENOMIC DNA]</scope>
</reference>
<reference key="2">
    <citation type="journal article" date="2006" name="Arch. Virol.">
        <title>Sequence variability of the human cytomegalovirus UL141 open reading frame in clinical strains.</title>
        <authorList>
            <person name="Ma Y.P."/>
            <person name="Ruan Q."/>
            <person name="He R."/>
            <person name="Qi Y."/>
            <person name="Sun Z.R."/>
            <person name="Ji Y.H."/>
            <person name="Huang Y.J."/>
            <person name="Liu Q."/>
            <person name="Chen S.R."/>
            <person name="Wang J.D."/>
        </authorList>
    </citation>
    <scope>NUCLEOTIDE SEQUENCE [GENOMIC DNA]</scope>
    <source>
        <strain>Isolate 10J</strain>
        <strain>Isolate 12M</strain>
        <strain>Isolate 13J</strain>
        <strain>Isolate 14J</strain>
        <strain>Isolate 16m</strain>
        <strain>Isolate 18M</strain>
        <strain>Isolate 1M</strain>
        <strain>Isolate 20M</strain>
        <strain>Isolate 27C</strain>
        <strain>Isolate 29C</strain>
        <strain>Isolate 2J</strain>
        <strain>Isolate 32C</strain>
        <strain>Isolate 33J</strain>
        <strain>Isolate 39J</strain>
        <strain>Isolate 51C</strain>
        <strain>Isolate 63J</strain>
        <strain>Isolate 84</strain>
        <strain>Isolate 8J</strain>
        <strain>Isolate 9J</strain>
    </source>
</reference>
<reference key="3">
    <citation type="submission" date="2012-08" db="EMBL/GenBank/DDBJ databases">
        <title>Human cytomegalovirus RL11 gene family: variation, recombination and transcription.</title>
        <authorList>
            <person name="Davison A.J."/>
        </authorList>
    </citation>
    <scope>NUCLEOTIDE SEQUENCE [GENOMIC DNA]</scope>
    <source>
        <strain>Isolate 6397</strain>
    </source>
</reference>
<reference key="4">
    <citation type="journal article" date="2005" name="Nat. Immunol.">
        <title>Downregulation of natural killer cell-activating ligand CD155 by human cytomegalovirus UL141.</title>
        <authorList>
            <person name="Tomasec P."/>
            <person name="Wang E.C."/>
            <person name="Davison A.J."/>
            <person name="Vojtesek B."/>
            <person name="Armstrong M."/>
            <person name="Griffin C."/>
            <person name="McSharry B.P."/>
            <person name="Morris R.J."/>
            <person name="Llewellyn-Lacey S."/>
            <person name="Rickards C."/>
            <person name="Nomoto A."/>
            <person name="Sinzger C."/>
            <person name="Wilkinson G.W."/>
        </authorList>
    </citation>
    <scope>INTERACTION WITH HUMAN PVR</scope>
</reference>
<reference key="5">
    <citation type="journal article" date="2010" name="J. Gen. Virol.">
        <title>Human cytomegalovirus UL141 promotes efficient downregulation of the natural killer cell activating ligand CD112.</title>
        <authorList>
            <person name="Prod'homme V."/>
            <person name="Sugrue D.M."/>
            <person name="Stanton R.J."/>
            <person name="Nomoto A."/>
            <person name="Davies J."/>
            <person name="Rickards C.R."/>
            <person name="Cochrane D."/>
            <person name="Moore M."/>
            <person name="Wilkinson G.W."/>
            <person name="Tomasec P."/>
        </authorList>
    </citation>
    <scope>FUNCTION</scope>
</reference>
<reference key="6">
    <citation type="journal article" date="2013" name="Cell Host Microbe">
        <title>Human cytomegalovirus glycoprotein UL141 targets the TRAIL death receptors to thwart host innate antiviral defenses.</title>
        <authorList>
            <person name="Smith W."/>
            <person name="Tomasec P."/>
            <person name="Aicheler R."/>
            <person name="Loewendorf A."/>
            <person name="Nemcovicova I."/>
            <person name="Wang E.C."/>
            <person name="Stanton R.J."/>
            <person name="Macauley M."/>
            <person name="Norris P."/>
            <person name="Willen L."/>
            <person name="Ruckova E."/>
            <person name="Nomoto A."/>
            <person name="Schneider P."/>
            <person name="Hahn G."/>
            <person name="Zajonc D.M."/>
            <person name="Ware C.F."/>
            <person name="Wilkinson G.W."/>
            <person name="Benedict C.A."/>
        </authorList>
    </citation>
    <scope>FUNCTION</scope>
    <scope>INTERACTION WITH HUMAN TNFRSF10A AND TNFRSF10B</scope>
    <scope>INDUCTION</scope>
</reference>
<reference key="7">
    <citation type="journal article" date="2013" name="PLoS Pathog.">
        <title>Structure of human cytomegalovirus UL141 binding to TRAIL-R2 reveals novel, non-canonical death receptor interactions.</title>
        <authorList>
            <person name="Nemcovicova I."/>
            <person name="Benedict C.A."/>
            <person name="Zajonc D.M."/>
        </authorList>
    </citation>
    <scope>X-RAY CRYSTALLOGRAPHY (2.10 ANGSTROMS) OF 32-246</scope>
    <scope>INTERACTION WITH HOST TNFRSF10B</scope>
    <scope>GLYCOSYLATION AT ASN-117; ASN-132 AND ASN-147</scope>
</reference>
<feature type="signal peptide" evidence="1">
    <location>
        <begin position="1"/>
        <end position="25"/>
    </location>
</feature>
<feature type="chain" id="PRO_0000253802" description="Protein UL141">
    <location>
        <begin position="26"/>
        <end position="338"/>
    </location>
</feature>
<feature type="topological domain" description="Extracellular" evidence="1">
    <location>
        <begin position="37"/>
        <end position="278"/>
    </location>
</feature>
<feature type="transmembrane region" description="Helical" evidence="1">
    <location>
        <begin position="279"/>
        <end position="299"/>
    </location>
</feature>
<feature type="topological domain" description="Cytoplasmic" evidence="1">
    <location>
        <begin position="300"/>
        <end position="338"/>
    </location>
</feature>
<feature type="glycosylation site" description="N-linked (GlcNAc...) asparagine; by host" evidence="1 5">
    <location>
        <position position="117"/>
    </location>
</feature>
<feature type="glycosylation site" description="N-linked (GlcNAc...) asparagine; by host" evidence="1 5">
    <location>
        <position position="132"/>
    </location>
</feature>
<feature type="glycosylation site" description="N-linked (GlcNAc...) asparagine; by host" evidence="1 5">
    <location>
        <position position="147"/>
    </location>
</feature>
<feature type="sequence variant" description="In strain: Isolate 1M.">
    <original>R</original>
    <variation>Q</variation>
    <location>
        <position position="8"/>
    </location>
</feature>
<feature type="sequence variant" description="In strain: Isolate 45J.">
    <original>V</original>
    <variation>T</variation>
    <location>
        <position position="16"/>
    </location>
</feature>
<feature type="sequence variant" description="In strain: Isolate 1M, Isolate 10J, Isolate 2J, Isolate 29C, Isolate 27C, Isolate 18M, Isolate 33J, Isolate 14, Isolate 32C, Isolate 39J, Isolate 63J, Isolate 25J and Isolate 9J.">
    <original>L</original>
    <variation>F</variation>
    <location>
        <position position="24"/>
    </location>
</feature>
<feature type="sequence variant" description="In strain: Isolate 10J, Isolate 2J, Isolate 29C, Isolate 27C, Isolate 18M, Isolate 33J, Isolate 14, Isolate 32C, Isolate 39J and Isolate 63J.">
    <original>E</original>
    <variation>K</variation>
    <location>
        <position position="25"/>
    </location>
</feature>
<feature type="sequence variant" description="In strain: Isolate 8J, Isolate 16m and Isolate 63J.">
    <original>Y</original>
    <variation>H</variation>
    <location>
        <position position="26"/>
    </location>
</feature>
<feature type="sequence variant" description="In strain: Isolate 84.">
    <original>S</original>
    <variation>F</variation>
    <location>
        <position position="28"/>
    </location>
</feature>
<feature type="sequence variant" description="In strain: Isolate 8J and Isolate 16m.">
    <original>S</original>
    <variation>L</variation>
    <location>
        <position position="30"/>
    </location>
</feature>
<feature type="sequence variant" description="In strain: Isolate 45J.">
    <original>T</original>
    <variation>I</variation>
    <location>
        <position position="35"/>
    </location>
</feature>
<feature type="sequence variant" description="In strain: Isolate 2J, Isolate 10J, Isolate 29C, Isolate 27C, Isolate 18M, Isolate 33J, Isolate 45J and Isolate 14.">
    <original>T</original>
    <variation>M</variation>
    <location>
        <position position="135"/>
    </location>
</feature>
<feature type="sequence variant" description="In strain: Isolate 10J.">
    <original>G</original>
    <variation>S</variation>
    <location>
        <position position="139"/>
    </location>
</feature>
<feature type="sequence variant" description="In strain: Isolate 2J, Isolate 10J, Isolate 25J, Isolate 39J, Isolate 45J, Isolate 29C, Isolate 27C, Isolate 18M, Isolate 33 and Isolate 14.">
    <original>M</original>
    <variation>T</variation>
    <location>
        <position position="202"/>
    </location>
</feature>
<feature type="sequence variant" description="In strain: Isolate 2J, Isolate 10J, Isolate 25J, Isolate 29C, Isolate 27C, Isolate 39J, Isolate 18M, Isolate 33J and Isolate 14.">
    <original>A</original>
    <variation>V</variation>
    <location>
        <position position="218"/>
    </location>
</feature>
<feature type="sequence variant" description="In strain: Isolate 6397.">
    <original>H</original>
    <variation>R</variation>
    <location>
        <position position="306"/>
    </location>
</feature>
<feature type="sequence variant" description="In strain: Isolate 13J and Isolate 51C.">
    <original>R</original>
    <variation>C</variation>
    <location>
        <position position="323"/>
    </location>
</feature>
<feature type="sequence variant" description="In strain: Isolate 2J, Isolate 10J, Isolate 45J, Isolate 29C, Isolate 27C, Isolate 18M, Isolate 33J and Isolate 14.">
    <original>K</original>
    <variation>R</variation>
    <location>
        <position position="334"/>
    </location>
</feature>
<feature type="strand" evidence="8">
    <location>
        <begin position="39"/>
        <end position="43"/>
    </location>
</feature>
<feature type="helix" evidence="8">
    <location>
        <begin position="47"/>
        <end position="50"/>
    </location>
</feature>
<feature type="strand" evidence="8">
    <location>
        <begin position="62"/>
        <end position="71"/>
    </location>
</feature>
<feature type="strand" evidence="8">
    <location>
        <begin position="75"/>
        <end position="86"/>
    </location>
</feature>
<feature type="strand" evidence="8">
    <location>
        <begin position="91"/>
        <end position="96"/>
    </location>
</feature>
<feature type="turn" evidence="8">
    <location>
        <begin position="97"/>
        <end position="99"/>
    </location>
</feature>
<feature type="strand" evidence="8">
    <location>
        <begin position="102"/>
        <end position="105"/>
    </location>
</feature>
<feature type="turn" evidence="8">
    <location>
        <begin position="106"/>
        <end position="110"/>
    </location>
</feature>
<feature type="strand" evidence="8">
    <location>
        <begin position="115"/>
        <end position="120"/>
    </location>
</feature>
<feature type="strand" evidence="8">
    <location>
        <begin position="122"/>
        <end position="132"/>
    </location>
</feature>
<feature type="turn" evidence="8">
    <location>
        <begin position="135"/>
        <end position="137"/>
    </location>
</feature>
<feature type="strand" evidence="8">
    <location>
        <begin position="139"/>
        <end position="146"/>
    </location>
</feature>
<feature type="strand" evidence="8">
    <location>
        <begin position="148"/>
        <end position="165"/>
    </location>
</feature>
<feature type="strand" evidence="8">
    <location>
        <begin position="183"/>
        <end position="186"/>
    </location>
</feature>
<feature type="helix" evidence="8">
    <location>
        <begin position="192"/>
        <end position="194"/>
    </location>
</feature>
<feature type="strand" evidence="8">
    <location>
        <begin position="195"/>
        <end position="199"/>
    </location>
</feature>
<feature type="strand" evidence="8">
    <location>
        <begin position="209"/>
        <end position="213"/>
    </location>
</feature>
<feature type="helix" evidence="8">
    <location>
        <begin position="235"/>
        <end position="238"/>
    </location>
</feature>
<sequence length="338" mass="38899">MCRRESLRTLPWLFWVLLSCPRLLEYSSSSFPFATADIAEKMWAENYETTSPAPVLVAEGEQVTIPCTVMTHSWPMVSIRARFCRSHDGSDELILDAVKGHRLMNGLQYRLPYATWNFSQLHLGQIFSLTFNVSTDTAGMYECVLRNYSHGLIMQRFVILTQLETLSRPDEPCCTPALGRYSLGDQIWSPTPWRLRNHDCGMYRGFQRNYFYIGRADAEDCWKPACPDEEPDRCWTVIQRYRLPGDCYRSQPHPPKFLPVTPAPPADIDTGMSPWATRGIAAFLGFWSIFTVCFLCYLCYLQCCGHWCPTPGRGRRGGEGYRRLPTYDSYPGVKKMKR</sequence>
<proteinExistence type="evidence at protein level"/>
<accession>Q6RJQ3</accession>
<accession>Q56JA4</accession>
<accession>Q6E2A5</accession>
<accession>Q6E2A6</accession>
<accession>Q6E2A7</accession>
<accession>Q6E2B3</accession>
<accession>Q6E2B4</accession>
<accession>Q6RJP5</accession>
<accession>Q6RJP6</accession>
<accession>Q6RJP7</accession>
<accession>Q6RJP9</accession>
<accession>Q6RJQ0</accession>
<accession>Q6RJQ1</accession>
<accession>Q6SWK7</accession>
<accession>V9LMQ6</accession>
<gene>
    <name type="primary">UL141</name>
</gene>
<comment type="function">
    <text evidence="3 4">Evasion of NK cell killing. Blocks surface expression of PVR which is a ligand for NK cell-activating receptors. Binds human PVR in the endoplasmic reticulum and prevents its maturation and transport to the cell surface. Targets also the natural killer cell activating ligand NECTIN2 for proteasome-mediated degradation. Additionally promotes intracellular retention of TNFRSF10A/TRAIL-R1 and TNFRSF10B/TRAIL-R2 and thus down-regulates their cell surface expression.</text>
</comment>
<comment type="subunit">
    <text evidence="2 4 5">Interacts with human PVR. Interacts with human TNFRSF10A and TNFRSF10B. Forms a homodimer that engages two TNFRSF10B monomers.</text>
</comment>
<comment type="subcellular location">
    <subcellularLocation>
        <location>Host endoplasmic reticulum membrane</location>
        <topology evidence="6">Single-pass type I membrane protein</topology>
    </subcellularLocation>
</comment>
<comment type="induction">
    <text evidence="4">Early-late protein (PubMed:23498957). Increases in abundance throughout the viral replication cycle (PubMed:23498957).</text>
</comment>
<comment type="caution">
    <text evidence="7">The UL/b' region coding for this gene is deleted in some HHV-5 laboratory strains, like strains AD169 or Towne.</text>
</comment>
<name>UL141_HCMVM</name>
<keyword id="KW-0002">3D-structure</keyword>
<keyword id="KW-0325">Glycoprotein</keyword>
<keyword id="KW-1038">Host endoplasmic reticulum</keyword>
<keyword id="KW-1043">Host membrane</keyword>
<keyword id="KW-0945">Host-virus interaction</keyword>
<keyword id="KW-0472">Membrane</keyword>
<keyword id="KW-1131">Modulation of host NK-cell activity by virus</keyword>
<keyword id="KW-1185">Reference proteome</keyword>
<keyword id="KW-0732">Signal</keyword>
<keyword id="KW-0812">Transmembrane</keyword>
<keyword id="KW-1133">Transmembrane helix</keyword>
<keyword id="KW-0899">Viral immunoevasion</keyword>
<evidence type="ECO:0000255" key="1"/>
<evidence type="ECO:0000269" key="2">
    <source>
    </source>
</evidence>
<evidence type="ECO:0000269" key="3">
    <source>
    </source>
</evidence>
<evidence type="ECO:0000269" key="4">
    <source>
    </source>
</evidence>
<evidence type="ECO:0000269" key="5">
    <source>
    </source>
</evidence>
<evidence type="ECO:0000303" key="6">
    <source>
    </source>
</evidence>
<evidence type="ECO:0000305" key="7"/>
<evidence type="ECO:0007829" key="8">
    <source>
        <dbReference type="PDB" id="4I9X"/>
    </source>
</evidence>
<organismHost>
    <name type="scientific">Homo sapiens</name>
    <name type="common">Human</name>
    <dbReference type="NCBI Taxonomy" id="9606"/>
</organismHost>
<dbReference type="EMBL" id="JX512197">
    <property type="protein sequence ID" value="AFR54616.1"/>
    <property type="molecule type" value="Genomic_DNA"/>
</dbReference>
<dbReference type="EMBL" id="AY446894">
    <property type="protein sequence ID" value="AAR31679.1"/>
    <property type="molecule type" value="Genomic_DNA"/>
</dbReference>
<dbReference type="EMBL" id="AY600463">
    <property type="protein sequence ID" value="AAT68302.1"/>
    <property type="molecule type" value="Genomic_DNA"/>
</dbReference>
<dbReference type="EMBL" id="AY496555">
    <property type="protein sequence ID" value="AAR92108.1"/>
    <property type="molecule type" value="Genomic_DNA"/>
</dbReference>
<dbReference type="EMBL" id="AY496547">
    <property type="protein sequence ID" value="AAR92100.1"/>
    <property type="molecule type" value="Genomic_DNA"/>
</dbReference>
<dbReference type="EMBL" id="AY600467">
    <property type="protein sequence ID" value="AAT68306.1"/>
    <property type="molecule type" value="Genomic_DNA"/>
</dbReference>
<dbReference type="EMBL" id="AY496549">
    <property type="protein sequence ID" value="AAR92102.1"/>
    <property type="molecule type" value="Genomic_DNA"/>
</dbReference>
<dbReference type="EMBL" id="AY496550">
    <property type="protein sequence ID" value="AAR92103.1"/>
    <property type="molecule type" value="Genomic_DNA"/>
</dbReference>
<dbReference type="EMBL" id="AY941105">
    <property type="protein sequence ID" value="AAX57274.1"/>
    <property type="molecule type" value="Genomic_DNA"/>
</dbReference>
<dbReference type="EMBL" id="AY496551">
    <property type="protein sequence ID" value="AAR92104.1"/>
    <property type="molecule type" value="Genomic_DNA"/>
</dbReference>
<dbReference type="EMBL" id="AY600465">
    <property type="protein sequence ID" value="AAT68304.1"/>
    <property type="molecule type" value="Genomic_DNA"/>
</dbReference>
<dbReference type="EMBL" id="AY600466">
    <property type="protein sequence ID" value="AAT68305.1"/>
    <property type="molecule type" value="Genomic_DNA"/>
</dbReference>
<dbReference type="EMBL" id="AY600464">
    <property type="protein sequence ID" value="AAT68303.1"/>
    <property type="molecule type" value="Genomic_DNA"/>
</dbReference>
<dbReference type="EMBL" id="AY600462">
    <property type="protein sequence ID" value="AAT68301.1"/>
    <property type="molecule type" value="Genomic_DNA"/>
</dbReference>
<dbReference type="EMBL" id="AY496552">
    <property type="protein sequence ID" value="AAR92105.1"/>
    <property type="molecule type" value="Genomic_DNA"/>
</dbReference>
<dbReference type="EMBL" id="AY496548">
    <property type="protein sequence ID" value="AAR92101.1"/>
    <property type="molecule type" value="Genomic_DNA"/>
</dbReference>
<dbReference type="EMBL" id="AY600468">
    <property type="protein sequence ID" value="AAT68307.1"/>
    <property type="molecule type" value="Genomic_DNA"/>
</dbReference>
<dbReference type="EMBL" id="AY600461">
    <property type="protein sequence ID" value="AAT68300.1"/>
    <property type="molecule type" value="Genomic_DNA"/>
</dbReference>
<dbReference type="EMBL" id="AY600459">
    <property type="protein sequence ID" value="AAT68298.1"/>
    <property type="molecule type" value="Genomic_DNA"/>
</dbReference>
<dbReference type="EMBL" id="AY941104">
    <property type="protein sequence ID" value="AAX57273.1"/>
    <property type="molecule type" value="Genomic_DNA"/>
</dbReference>
<dbReference type="EMBL" id="AY496554">
    <property type="protein sequence ID" value="AAR92107.1"/>
    <property type="molecule type" value="Genomic_DNA"/>
</dbReference>
<dbReference type="EMBL" id="AY600460">
    <property type="protein sequence ID" value="AAT68299.1"/>
    <property type="molecule type" value="Genomic_DNA"/>
</dbReference>
<dbReference type="EMBL" id="AY496553">
    <property type="protein sequence ID" value="AAR92106.1"/>
    <property type="molecule type" value="Genomic_DNA"/>
</dbReference>
<dbReference type="RefSeq" id="YP_081575.1">
    <property type="nucleotide sequence ID" value="NC_006273.2"/>
</dbReference>
<dbReference type="PDB" id="4I9X">
    <property type="method" value="X-ray"/>
    <property type="resolution" value="2.10 A"/>
    <property type="chains" value="A/B=32-246"/>
</dbReference>
<dbReference type="PDB" id="4JM0">
    <property type="method" value="X-ray"/>
    <property type="resolution" value="3.25 A"/>
    <property type="chains" value="A/B=30-279"/>
</dbReference>
<dbReference type="PDB" id="9DIX">
    <property type="method" value="EM"/>
    <property type="resolution" value="3.51 A"/>
    <property type="chains" value="B/E=30-279"/>
</dbReference>
<dbReference type="PDB" id="9DIY">
    <property type="method" value="EM"/>
    <property type="resolution" value="5.36 A"/>
    <property type="chains" value="B=30-279"/>
</dbReference>
<dbReference type="PDBsum" id="4I9X"/>
<dbReference type="PDBsum" id="4JM0"/>
<dbReference type="PDBsum" id="9DIX"/>
<dbReference type="PDBsum" id="9DIY"/>
<dbReference type="EMDB" id="EMD-46920"/>
<dbReference type="EMDB" id="EMD-46921"/>
<dbReference type="SMR" id="Q6RJQ3"/>
<dbReference type="GlyCosmos" id="Q6RJQ3">
    <property type="glycosylation" value="3 sites, No reported glycans"/>
</dbReference>
<dbReference type="iPTMnet" id="Q6RJQ3"/>
<dbReference type="DNASU" id="3077418"/>
<dbReference type="GeneID" id="3077418"/>
<dbReference type="KEGG" id="vg:3077418"/>
<dbReference type="EvolutionaryTrace" id="Q6RJQ3"/>
<dbReference type="Proteomes" id="UP000000938">
    <property type="component" value="Segment"/>
</dbReference>
<dbReference type="Proteomes" id="UP000169440">
    <property type="component" value="Segment"/>
</dbReference>
<dbReference type="GO" id="GO:0044167">
    <property type="term" value="C:host cell endoplasmic reticulum membrane"/>
    <property type="evidence" value="ECO:0007669"/>
    <property type="project" value="UniProtKB-SubCell"/>
</dbReference>
<dbReference type="GO" id="GO:0016020">
    <property type="term" value="C:membrane"/>
    <property type="evidence" value="ECO:0007669"/>
    <property type="project" value="UniProtKB-KW"/>
</dbReference>
<dbReference type="GO" id="GO:0039671">
    <property type="term" value="P:symbiont-mediated perturbation of host natural killer cell mediated immune response"/>
    <property type="evidence" value="ECO:0007669"/>
    <property type="project" value="UniProtKB-KW"/>
</dbReference>
<dbReference type="Gene3D" id="2.60.40.3790">
    <property type="match status" value="1"/>
</dbReference>
<dbReference type="InterPro" id="IPR036179">
    <property type="entry name" value="Ig-like_dom_sf"/>
</dbReference>
<dbReference type="InterPro" id="IPR031918">
    <property type="entry name" value="UL141"/>
</dbReference>
<dbReference type="InterPro" id="IPR038504">
    <property type="entry name" value="UL141-like_sf"/>
</dbReference>
<dbReference type="Pfam" id="PF16758">
    <property type="entry name" value="UL141"/>
    <property type="match status" value="1"/>
</dbReference>
<dbReference type="SUPFAM" id="SSF48726">
    <property type="entry name" value="Immunoglobulin"/>
    <property type="match status" value="1"/>
</dbReference>